<accession>O31139</accession>
<evidence type="ECO:0000250" key="1"/>
<evidence type="ECO:0000255" key="2"/>
<evidence type="ECO:0000305" key="3"/>
<keyword id="KW-0028">Amino-acid biosynthesis</keyword>
<keyword id="KW-0963">Cytoplasm</keyword>
<keyword id="KW-0368">Histidine biosynthesis</keyword>
<keyword id="KW-0456">Lyase</keyword>
<keyword id="KW-1185">Reference proteome</keyword>
<organism>
    <name type="scientific">Corynebacterium glutamicum (strain ATCC 13032 / DSM 20300 / JCM 1318 / BCRC 11384 / CCUG 27702 / LMG 3730 / NBRC 12168 / NCIMB 10025 / NRRL B-2784 / 534)</name>
    <dbReference type="NCBI Taxonomy" id="196627"/>
    <lineage>
        <taxon>Bacteria</taxon>
        <taxon>Bacillati</taxon>
        <taxon>Actinomycetota</taxon>
        <taxon>Actinomycetes</taxon>
        <taxon>Mycobacteriales</taxon>
        <taxon>Corynebacteriaceae</taxon>
        <taxon>Corynebacterium</taxon>
    </lineage>
</organism>
<gene>
    <name type="primary">hisF</name>
    <name type="ordered locus">Cgl2094</name>
    <name type="ordered locus">cg2297</name>
</gene>
<name>HIS6_CORGL</name>
<feature type="chain" id="PRO_0000142148" description="Imidazole glycerol phosphate synthase subunit HisF">
    <location>
        <begin position="1"/>
        <end position="258"/>
    </location>
</feature>
<feature type="active site" evidence="2">
    <location>
        <position position="12"/>
    </location>
</feature>
<feature type="active site" evidence="2">
    <location>
        <position position="131"/>
    </location>
</feature>
<feature type="sequence conflict" description="In Ref. 1; AAB84280." evidence="3" ref="1">
    <original>RDAG</original>
    <variation>AMLA</variation>
    <location>
        <begin position="28"/>
        <end position="31"/>
    </location>
</feature>
<feature type="sequence conflict" description="In Ref. 1; AAB84280." evidence="3" ref="1">
    <original>S</original>
    <variation>W</variation>
    <location>
        <position position="118"/>
    </location>
</feature>
<feature type="sequence conflict" description="In Ref. 1; AAB84280." evidence="3" ref="1">
    <location>
        <position position="208"/>
    </location>
</feature>
<feature type="sequence conflict" description="In Ref. 1; AAB84280." evidence="3" ref="1">
    <original>A</original>
    <variation>R</variation>
    <location>
        <position position="224"/>
    </location>
</feature>
<comment type="function">
    <text evidence="1">IGPS catalyzes the conversion of PRFAR and glutamine to IGP, AICAR and glutamate. The HisF subunit catalyzes the cyclization activity that produces IGP and AICAR from PRFAR using the ammonia provided by the HisH subunit (By similarity).</text>
</comment>
<comment type="catalytic activity">
    <reaction>
        <text>5-[(5-phospho-1-deoxy-D-ribulos-1-ylimino)methylamino]-1-(5-phospho-beta-D-ribosyl)imidazole-4-carboxamide + L-glutamine = D-erythro-1-(imidazol-4-yl)glycerol 3-phosphate + 5-amino-1-(5-phospho-beta-D-ribosyl)imidazole-4-carboxamide + L-glutamate + H(+)</text>
        <dbReference type="Rhea" id="RHEA:24793"/>
        <dbReference type="ChEBI" id="CHEBI:15378"/>
        <dbReference type="ChEBI" id="CHEBI:29985"/>
        <dbReference type="ChEBI" id="CHEBI:58278"/>
        <dbReference type="ChEBI" id="CHEBI:58359"/>
        <dbReference type="ChEBI" id="CHEBI:58475"/>
        <dbReference type="ChEBI" id="CHEBI:58525"/>
        <dbReference type="EC" id="4.3.2.10"/>
    </reaction>
</comment>
<comment type="pathway">
    <text>Amino-acid biosynthesis; L-histidine biosynthesis; L-histidine from 5-phospho-alpha-D-ribose 1-diphosphate: step 5/9.</text>
</comment>
<comment type="subunit">
    <text evidence="1">Heterodimer of HisH and HisF.</text>
</comment>
<comment type="subcellular location">
    <subcellularLocation>
        <location evidence="1">Cytoplasm</location>
    </subcellularLocation>
</comment>
<comment type="similarity">
    <text evidence="3">Belongs to the HisA/HisF family.</text>
</comment>
<dbReference type="EC" id="4.3.2.10"/>
<dbReference type="EMBL" id="AF030405">
    <property type="protein sequence ID" value="AAB84280.1"/>
    <property type="molecule type" value="Genomic_DNA"/>
</dbReference>
<dbReference type="EMBL" id="BA000036">
    <property type="protein sequence ID" value="BAB99487.1"/>
    <property type="molecule type" value="Genomic_DNA"/>
</dbReference>
<dbReference type="EMBL" id="BX927154">
    <property type="protein sequence ID" value="CAF20430.1"/>
    <property type="molecule type" value="Genomic_DNA"/>
</dbReference>
<dbReference type="PIR" id="JE0214">
    <property type="entry name" value="JE0214"/>
</dbReference>
<dbReference type="RefSeq" id="NP_601293.1">
    <property type="nucleotide sequence ID" value="NC_003450.3"/>
</dbReference>
<dbReference type="RefSeq" id="WP_003856413.1">
    <property type="nucleotide sequence ID" value="NC_006958.1"/>
</dbReference>
<dbReference type="SMR" id="O31139"/>
<dbReference type="STRING" id="196627.cg2297"/>
<dbReference type="GeneID" id="1020045"/>
<dbReference type="KEGG" id="cgb:cg2297"/>
<dbReference type="KEGG" id="cgl:Cgl2094"/>
<dbReference type="PATRIC" id="fig|196627.13.peg.2030"/>
<dbReference type="eggNOG" id="COG0107">
    <property type="taxonomic scope" value="Bacteria"/>
</dbReference>
<dbReference type="HOGENOM" id="CLU_048577_4_0_11"/>
<dbReference type="OrthoDB" id="9781903at2"/>
<dbReference type="BioCyc" id="CORYNE:G18NG-11686-MONOMER"/>
<dbReference type="UniPathway" id="UPA00031">
    <property type="reaction ID" value="UER00010"/>
</dbReference>
<dbReference type="Proteomes" id="UP000000582">
    <property type="component" value="Chromosome"/>
</dbReference>
<dbReference type="Proteomes" id="UP000001009">
    <property type="component" value="Chromosome"/>
</dbReference>
<dbReference type="GO" id="GO:0005737">
    <property type="term" value="C:cytoplasm"/>
    <property type="evidence" value="ECO:0007669"/>
    <property type="project" value="UniProtKB-SubCell"/>
</dbReference>
<dbReference type="GO" id="GO:0000107">
    <property type="term" value="F:imidazoleglycerol-phosphate synthase activity"/>
    <property type="evidence" value="ECO:0007669"/>
    <property type="project" value="UniProtKB-UniRule"/>
</dbReference>
<dbReference type="GO" id="GO:0016829">
    <property type="term" value="F:lyase activity"/>
    <property type="evidence" value="ECO:0007669"/>
    <property type="project" value="UniProtKB-KW"/>
</dbReference>
<dbReference type="GO" id="GO:0000105">
    <property type="term" value="P:L-histidine biosynthetic process"/>
    <property type="evidence" value="ECO:0007669"/>
    <property type="project" value="UniProtKB-UniRule"/>
</dbReference>
<dbReference type="CDD" id="cd04731">
    <property type="entry name" value="HisF"/>
    <property type="match status" value="1"/>
</dbReference>
<dbReference type="FunFam" id="3.20.20.70:FF:000006">
    <property type="entry name" value="Imidazole glycerol phosphate synthase subunit HisF"/>
    <property type="match status" value="1"/>
</dbReference>
<dbReference type="Gene3D" id="3.20.20.70">
    <property type="entry name" value="Aldolase class I"/>
    <property type="match status" value="1"/>
</dbReference>
<dbReference type="HAMAP" id="MF_01013">
    <property type="entry name" value="HisF"/>
    <property type="match status" value="1"/>
</dbReference>
<dbReference type="InterPro" id="IPR013785">
    <property type="entry name" value="Aldolase_TIM"/>
</dbReference>
<dbReference type="InterPro" id="IPR006062">
    <property type="entry name" value="His_biosynth"/>
</dbReference>
<dbReference type="InterPro" id="IPR004651">
    <property type="entry name" value="HisF"/>
</dbReference>
<dbReference type="InterPro" id="IPR050064">
    <property type="entry name" value="IGPS_HisA/HisF"/>
</dbReference>
<dbReference type="InterPro" id="IPR011060">
    <property type="entry name" value="RibuloseP-bd_barrel"/>
</dbReference>
<dbReference type="NCBIfam" id="TIGR00735">
    <property type="entry name" value="hisF"/>
    <property type="match status" value="1"/>
</dbReference>
<dbReference type="PANTHER" id="PTHR21235:SF2">
    <property type="entry name" value="IMIDAZOLE GLYCEROL PHOSPHATE SYNTHASE HISHF"/>
    <property type="match status" value="1"/>
</dbReference>
<dbReference type="PANTHER" id="PTHR21235">
    <property type="entry name" value="IMIDAZOLE GLYCEROL PHOSPHATE SYNTHASE SUBUNIT HISF/H IGP SYNTHASE SUBUNIT HISF/H"/>
    <property type="match status" value="1"/>
</dbReference>
<dbReference type="Pfam" id="PF00977">
    <property type="entry name" value="His_biosynth"/>
    <property type="match status" value="1"/>
</dbReference>
<dbReference type="SUPFAM" id="SSF51366">
    <property type="entry name" value="Ribulose-phoshate binding barrel"/>
    <property type="match status" value="1"/>
</dbReference>
<sequence length="258" mass="27245">MGVAIRVIPCLDVDNGRVVKGVNFENLRDAGDPVELAKRYDEEGADELTFLDVTASKHGRGTMLDVVRRTADQVFIPLTVGGGVRSEEDVDQLLRAGADKVSVNTSAIARPELLSELSKRFGAQCIVLSVDARRVPEGGTPQPSGFEVTTHGGSKSAELDAIEWAKRGEELGVGEILLNSMDGDGTKNGFDLELLEKVRAAVSIPVIASGGAGKAEHFPPAVAAGANAVLAATIFHFREVTIAEVKGAIKDAGFEVRK</sequence>
<reference key="1">
    <citation type="journal article" date="1998" name="Biochem. Biophys. Res. Commun.">
        <title>Cloning of the histidine biosynthetic genes of Corynebacterium glutamicum: organization and sequencing analysis of the hisA, impA, and hisF gene cluster.</title>
        <authorList>
            <person name="Jung S.-I."/>
            <person name="Han M.-S."/>
            <person name="Kwon J.-H."/>
            <person name="Cheon C.-I."/>
            <person name="Min K.-H."/>
            <person name="Lee M.-S."/>
        </authorList>
    </citation>
    <scope>NUCLEOTIDE SEQUENCE [GENOMIC DNA]</scope>
    <source>
        <strain>ATCC 13059 / LMG 3658 / NCIB 10332 / AS019 / 613</strain>
    </source>
</reference>
<reference key="2">
    <citation type="journal article" date="2003" name="Appl. Microbiol. Biotechnol.">
        <title>The Corynebacterium glutamicum genome: features and impacts on biotechnological processes.</title>
        <authorList>
            <person name="Ikeda M."/>
            <person name="Nakagawa S."/>
        </authorList>
    </citation>
    <scope>NUCLEOTIDE SEQUENCE [LARGE SCALE GENOMIC DNA]</scope>
    <source>
        <strain>ATCC 13032 / DSM 20300 / JCM 1318 / BCRC 11384 / CCUG 27702 / LMG 3730 / NBRC 12168 / NCIMB 10025 / NRRL B-2784 / 534</strain>
    </source>
</reference>
<reference key="3">
    <citation type="journal article" date="2003" name="J. Biotechnol.">
        <title>The complete Corynebacterium glutamicum ATCC 13032 genome sequence and its impact on the production of L-aspartate-derived amino acids and vitamins.</title>
        <authorList>
            <person name="Kalinowski J."/>
            <person name="Bathe B."/>
            <person name="Bartels D."/>
            <person name="Bischoff N."/>
            <person name="Bott M."/>
            <person name="Burkovski A."/>
            <person name="Dusch N."/>
            <person name="Eggeling L."/>
            <person name="Eikmanns B.J."/>
            <person name="Gaigalat L."/>
            <person name="Goesmann A."/>
            <person name="Hartmann M."/>
            <person name="Huthmacher K."/>
            <person name="Kraemer R."/>
            <person name="Linke B."/>
            <person name="McHardy A.C."/>
            <person name="Meyer F."/>
            <person name="Moeckel B."/>
            <person name="Pfefferle W."/>
            <person name="Puehler A."/>
            <person name="Rey D.A."/>
            <person name="Rueckert C."/>
            <person name="Rupp O."/>
            <person name="Sahm H."/>
            <person name="Wendisch V.F."/>
            <person name="Wiegraebe I."/>
            <person name="Tauch A."/>
        </authorList>
    </citation>
    <scope>NUCLEOTIDE SEQUENCE [LARGE SCALE GENOMIC DNA]</scope>
    <source>
        <strain>ATCC 13032 / DSM 20300 / JCM 1318 / BCRC 11384 / CCUG 27702 / LMG 3730 / NBRC 12168 / NCIMB 10025 / NRRL B-2784 / 534</strain>
    </source>
</reference>
<protein>
    <recommendedName>
        <fullName>Imidazole glycerol phosphate synthase subunit HisF</fullName>
        <ecNumber>4.3.2.10</ecNumber>
    </recommendedName>
    <alternativeName>
        <fullName>IGP synthase cyclase subunit</fullName>
    </alternativeName>
    <alternativeName>
        <fullName>IGP synthase subunit HisF</fullName>
    </alternativeName>
    <alternativeName>
        <fullName>ImGP synthase subunit HisF</fullName>
        <shortName>IGPS subunit HisF</shortName>
    </alternativeName>
</protein>
<proteinExistence type="inferred from homology"/>